<sequence>MENIGTILRLAEDKILLVQNLKALQEYKVEFLGKNGIVTGELKKLGSLNEQERKEFGLKINKLKDKIQNIIKAKAEILEEQELNFKLAADKIDLTIPARRYKQGSIHPITQCSEELIQVFSQFGFTIENGPNIENDFHNFTALNFEDDHPARQMHDTFYLKSQENNKPLLLRTHTSTVQIRAMKNGKPPFRFIAPGRTYRSDSDMTHTPMFHQIEGLVMDKNINMGHLKYVITTFIKSFFENSNIELRFRPSFFPFTEPSAEVDIRMNKNDKWLEVLGCGMVHPNVLKNVGIDSSEYQGFAFGLGVERFAMLKYNIKDLRQFFEGDMRWLKHYNFGSFDIPNLAGGLTK</sequence>
<gene>
    <name evidence="1" type="primary">pheS</name>
    <name type="ordered locus">A1G_03280</name>
</gene>
<feature type="chain" id="PRO_1000006888" description="Phenylalanine--tRNA ligase alpha subunit">
    <location>
        <begin position="1"/>
        <end position="349"/>
    </location>
</feature>
<feature type="binding site" evidence="1">
    <location>
        <position position="258"/>
    </location>
    <ligand>
        <name>Mg(2+)</name>
        <dbReference type="ChEBI" id="CHEBI:18420"/>
        <note>shared with beta subunit</note>
    </ligand>
</feature>
<proteinExistence type="inferred from homology"/>
<protein>
    <recommendedName>
        <fullName evidence="1">Phenylalanine--tRNA ligase alpha subunit</fullName>
        <ecNumber evidence="1">6.1.1.20</ecNumber>
    </recommendedName>
    <alternativeName>
        <fullName evidence="1">Phenylalanyl-tRNA synthetase alpha subunit</fullName>
        <shortName evidence="1">PheRS</shortName>
    </alternativeName>
</protein>
<organism>
    <name type="scientific">Rickettsia rickettsii (strain Sheila Smith)</name>
    <dbReference type="NCBI Taxonomy" id="392021"/>
    <lineage>
        <taxon>Bacteria</taxon>
        <taxon>Pseudomonadati</taxon>
        <taxon>Pseudomonadota</taxon>
        <taxon>Alphaproteobacteria</taxon>
        <taxon>Rickettsiales</taxon>
        <taxon>Rickettsiaceae</taxon>
        <taxon>Rickettsieae</taxon>
        <taxon>Rickettsia</taxon>
        <taxon>spotted fever group</taxon>
    </lineage>
</organism>
<dbReference type="EC" id="6.1.1.20" evidence="1"/>
<dbReference type="EMBL" id="CP000848">
    <property type="protein sequence ID" value="ABV76187.1"/>
    <property type="molecule type" value="Genomic_DNA"/>
</dbReference>
<dbReference type="RefSeq" id="WP_012150774.1">
    <property type="nucleotide sequence ID" value="NZ_CP121767.1"/>
</dbReference>
<dbReference type="SMR" id="A8GS12"/>
<dbReference type="GeneID" id="79937327"/>
<dbReference type="KEGG" id="rri:A1G_03280"/>
<dbReference type="HOGENOM" id="CLU_025086_0_1_5"/>
<dbReference type="Proteomes" id="UP000006832">
    <property type="component" value="Chromosome"/>
</dbReference>
<dbReference type="GO" id="GO:0005737">
    <property type="term" value="C:cytoplasm"/>
    <property type="evidence" value="ECO:0007669"/>
    <property type="project" value="UniProtKB-SubCell"/>
</dbReference>
<dbReference type="GO" id="GO:0005524">
    <property type="term" value="F:ATP binding"/>
    <property type="evidence" value="ECO:0007669"/>
    <property type="project" value="UniProtKB-UniRule"/>
</dbReference>
<dbReference type="GO" id="GO:0000287">
    <property type="term" value="F:magnesium ion binding"/>
    <property type="evidence" value="ECO:0007669"/>
    <property type="project" value="UniProtKB-UniRule"/>
</dbReference>
<dbReference type="GO" id="GO:0004826">
    <property type="term" value="F:phenylalanine-tRNA ligase activity"/>
    <property type="evidence" value="ECO:0007669"/>
    <property type="project" value="UniProtKB-UniRule"/>
</dbReference>
<dbReference type="GO" id="GO:0000049">
    <property type="term" value="F:tRNA binding"/>
    <property type="evidence" value="ECO:0007669"/>
    <property type="project" value="InterPro"/>
</dbReference>
<dbReference type="GO" id="GO:0006432">
    <property type="term" value="P:phenylalanyl-tRNA aminoacylation"/>
    <property type="evidence" value="ECO:0007669"/>
    <property type="project" value="UniProtKB-UniRule"/>
</dbReference>
<dbReference type="CDD" id="cd00496">
    <property type="entry name" value="PheRS_alpha_core"/>
    <property type="match status" value="1"/>
</dbReference>
<dbReference type="FunFam" id="3.30.930.10:FF:000003">
    <property type="entry name" value="Phenylalanine--tRNA ligase alpha subunit"/>
    <property type="match status" value="1"/>
</dbReference>
<dbReference type="Gene3D" id="3.30.930.10">
    <property type="entry name" value="Bira Bifunctional Protein, Domain 2"/>
    <property type="match status" value="1"/>
</dbReference>
<dbReference type="HAMAP" id="MF_00281">
    <property type="entry name" value="Phe_tRNA_synth_alpha1"/>
    <property type="match status" value="1"/>
</dbReference>
<dbReference type="InterPro" id="IPR006195">
    <property type="entry name" value="aa-tRNA-synth_II"/>
</dbReference>
<dbReference type="InterPro" id="IPR045864">
    <property type="entry name" value="aa-tRNA-synth_II/BPL/LPL"/>
</dbReference>
<dbReference type="InterPro" id="IPR004529">
    <property type="entry name" value="Phe-tRNA-synth_IIc_asu"/>
</dbReference>
<dbReference type="InterPro" id="IPR004188">
    <property type="entry name" value="Phe-tRNA_ligase_II_N"/>
</dbReference>
<dbReference type="InterPro" id="IPR022911">
    <property type="entry name" value="Phe_tRNA_ligase_alpha1_bac"/>
</dbReference>
<dbReference type="InterPro" id="IPR002319">
    <property type="entry name" value="Phenylalanyl-tRNA_Synthase"/>
</dbReference>
<dbReference type="InterPro" id="IPR010978">
    <property type="entry name" value="tRNA-bd_arm"/>
</dbReference>
<dbReference type="NCBIfam" id="TIGR00468">
    <property type="entry name" value="pheS"/>
    <property type="match status" value="1"/>
</dbReference>
<dbReference type="PANTHER" id="PTHR11538:SF41">
    <property type="entry name" value="PHENYLALANINE--TRNA LIGASE, MITOCHONDRIAL"/>
    <property type="match status" value="1"/>
</dbReference>
<dbReference type="PANTHER" id="PTHR11538">
    <property type="entry name" value="PHENYLALANYL-TRNA SYNTHETASE"/>
    <property type="match status" value="1"/>
</dbReference>
<dbReference type="Pfam" id="PF02912">
    <property type="entry name" value="Phe_tRNA-synt_N"/>
    <property type="match status" value="1"/>
</dbReference>
<dbReference type="Pfam" id="PF01409">
    <property type="entry name" value="tRNA-synt_2d"/>
    <property type="match status" value="1"/>
</dbReference>
<dbReference type="SUPFAM" id="SSF55681">
    <property type="entry name" value="Class II aaRS and biotin synthetases"/>
    <property type="match status" value="1"/>
</dbReference>
<dbReference type="SUPFAM" id="SSF46589">
    <property type="entry name" value="tRNA-binding arm"/>
    <property type="match status" value="1"/>
</dbReference>
<dbReference type="PROSITE" id="PS50862">
    <property type="entry name" value="AA_TRNA_LIGASE_II"/>
    <property type="match status" value="1"/>
</dbReference>
<accession>A8GS12</accession>
<comment type="catalytic activity">
    <reaction evidence="1">
        <text>tRNA(Phe) + L-phenylalanine + ATP = L-phenylalanyl-tRNA(Phe) + AMP + diphosphate + H(+)</text>
        <dbReference type="Rhea" id="RHEA:19413"/>
        <dbReference type="Rhea" id="RHEA-COMP:9668"/>
        <dbReference type="Rhea" id="RHEA-COMP:9699"/>
        <dbReference type="ChEBI" id="CHEBI:15378"/>
        <dbReference type="ChEBI" id="CHEBI:30616"/>
        <dbReference type="ChEBI" id="CHEBI:33019"/>
        <dbReference type="ChEBI" id="CHEBI:58095"/>
        <dbReference type="ChEBI" id="CHEBI:78442"/>
        <dbReference type="ChEBI" id="CHEBI:78531"/>
        <dbReference type="ChEBI" id="CHEBI:456215"/>
        <dbReference type="EC" id="6.1.1.20"/>
    </reaction>
</comment>
<comment type="cofactor">
    <cofactor evidence="1">
        <name>Mg(2+)</name>
        <dbReference type="ChEBI" id="CHEBI:18420"/>
    </cofactor>
    <text evidence="1">Binds 2 magnesium ions per tetramer.</text>
</comment>
<comment type="subunit">
    <text evidence="1">Tetramer of two alpha and two beta subunits.</text>
</comment>
<comment type="subcellular location">
    <subcellularLocation>
        <location evidence="1">Cytoplasm</location>
    </subcellularLocation>
</comment>
<comment type="similarity">
    <text evidence="1">Belongs to the class-II aminoacyl-tRNA synthetase family. Phe-tRNA synthetase alpha subunit type 1 subfamily.</text>
</comment>
<reference key="1">
    <citation type="submission" date="2007-09" db="EMBL/GenBank/DDBJ databases">
        <title>Complete genome sequence of Rickettsia rickettsii.</title>
        <authorList>
            <person name="Madan A."/>
            <person name="Fahey J."/>
            <person name="Helton E."/>
            <person name="Ketteman M."/>
            <person name="Madan A."/>
            <person name="Rodrigues S."/>
            <person name="Sanchez A."/>
            <person name="Dasch G."/>
            <person name="Eremeeva M."/>
        </authorList>
    </citation>
    <scope>NUCLEOTIDE SEQUENCE [LARGE SCALE GENOMIC DNA]</scope>
    <source>
        <strain>Sheila Smith</strain>
    </source>
</reference>
<name>SYFA_RICRS</name>
<evidence type="ECO:0000255" key="1">
    <source>
        <dbReference type="HAMAP-Rule" id="MF_00281"/>
    </source>
</evidence>
<keyword id="KW-0030">Aminoacyl-tRNA synthetase</keyword>
<keyword id="KW-0067">ATP-binding</keyword>
<keyword id="KW-0963">Cytoplasm</keyword>
<keyword id="KW-0436">Ligase</keyword>
<keyword id="KW-0460">Magnesium</keyword>
<keyword id="KW-0479">Metal-binding</keyword>
<keyword id="KW-0547">Nucleotide-binding</keyword>
<keyword id="KW-0648">Protein biosynthesis</keyword>